<organism>
    <name type="scientific">Moorella thermoacetica (strain ATCC 39073 / JCM 9320)</name>
    <dbReference type="NCBI Taxonomy" id="264732"/>
    <lineage>
        <taxon>Bacteria</taxon>
        <taxon>Bacillati</taxon>
        <taxon>Bacillota</taxon>
        <taxon>Clostridia</taxon>
        <taxon>Moorellales</taxon>
        <taxon>Moorellaceae</taxon>
        <taxon>Moorella</taxon>
    </lineage>
</organism>
<feature type="chain" id="PRO_0000235626" description="5'-nucleotidase SurE">
    <location>
        <begin position="1"/>
        <end position="260"/>
    </location>
</feature>
<feature type="binding site" evidence="1">
    <location>
        <position position="8"/>
    </location>
    <ligand>
        <name>a divalent metal cation</name>
        <dbReference type="ChEBI" id="CHEBI:60240"/>
    </ligand>
</feature>
<feature type="binding site" evidence="1">
    <location>
        <position position="9"/>
    </location>
    <ligand>
        <name>a divalent metal cation</name>
        <dbReference type="ChEBI" id="CHEBI:60240"/>
    </ligand>
</feature>
<feature type="binding site" evidence="1">
    <location>
        <position position="39"/>
    </location>
    <ligand>
        <name>a divalent metal cation</name>
        <dbReference type="ChEBI" id="CHEBI:60240"/>
    </ligand>
</feature>
<feature type="binding site" evidence="1">
    <location>
        <position position="96"/>
    </location>
    <ligand>
        <name>a divalent metal cation</name>
        <dbReference type="ChEBI" id="CHEBI:60240"/>
    </ligand>
</feature>
<gene>
    <name evidence="1" type="primary">surE</name>
    <name type="ordered locus">Moth_1144</name>
</gene>
<comment type="function">
    <text evidence="1">Nucleotidase that shows phosphatase activity on nucleoside 5'-monophosphates.</text>
</comment>
<comment type="catalytic activity">
    <reaction evidence="1">
        <text>a ribonucleoside 5'-phosphate + H2O = a ribonucleoside + phosphate</text>
        <dbReference type="Rhea" id="RHEA:12484"/>
        <dbReference type="ChEBI" id="CHEBI:15377"/>
        <dbReference type="ChEBI" id="CHEBI:18254"/>
        <dbReference type="ChEBI" id="CHEBI:43474"/>
        <dbReference type="ChEBI" id="CHEBI:58043"/>
        <dbReference type="EC" id="3.1.3.5"/>
    </reaction>
</comment>
<comment type="cofactor">
    <cofactor evidence="1">
        <name>a divalent metal cation</name>
        <dbReference type="ChEBI" id="CHEBI:60240"/>
    </cofactor>
    <text evidence="1">Binds 1 divalent metal cation per subunit.</text>
</comment>
<comment type="subcellular location">
    <subcellularLocation>
        <location evidence="1">Cytoplasm</location>
    </subcellularLocation>
</comment>
<comment type="similarity">
    <text evidence="1">Belongs to the SurE nucleotidase family.</text>
</comment>
<protein>
    <recommendedName>
        <fullName evidence="1">5'-nucleotidase SurE</fullName>
        <ecNumber evidence="1">3.1.3.5</ecNumber>
    </recommendedName>
    <alternativeName>
        <fullName evidence="1">Nucleoside 5'-monophosphate phosphohydrolase</fullName>
    </alternativeName>
</protein>
<name>SURE_MOOTA</name>
<sequence length="260" mass="27647">MLILVTNDDGINAPGIKALSRSLARVGRVAVVAPEKERSAIGHGITMHKPLRATEVTWEGPVEMALAVNGTPADCVKLALDALLDEEPSLVVSGINMGANLGTDVLYSGTVSGALEGCINGRPSLAVSLAGEGGVDFSFAADFTSRLAGVIIKRGLPAGTLLNLNIPCLPPGEIKGLAITRLGRRRYCNTITRRLDPRGRAYYWLAGEVEDLDQEPDTDIGALGQGRISITPLHLDLTNYSYQQELAAYLSFLWPGQGNR</sequence>
<accession>Q2RJD1</accession>
<proteinExistence type="inferred from homology"/>
<dbReference type="EC" id="3.1.3.5" evidence="1"/>
<dbReference type="EMBL" id="CP000232">
    <property type="protein sequence ID" value="ABC19458.1"/>
    <property type="molecule type" value="Genomic_DNA"/>
</dbReference>
<dbReference type="RefSeq" id="YP_430001.1">
    <property type="nucleotide sequence ID" value="NC_007644.1"/>
</dbReference>
<dbReference type="SMR" id="Q2RJD1"/>
<dbReference type="STRING" id="264732.Moth_1144"/>
<dbReference type="EnsemblBacteria" id="ABC19458">
    <property type="protein sequence ID" value="ABC19458"/>
    <property type="gene ID" value="Moth_1144"/>
</dbReference>
<dbReference type="KEGG" id="mta:Moth_1144"/>
<dbReference type="PATRIC" id="fig|264732.11.peg.1226"/>
<dbReference type="eggNOG" id="COG0496">
    <property type="taxonomic scope" value="Bacteria"/>
</dbReference>
<dbReference type="HOGENOM" id="CLU_045192_1_3_9"/>
<dbReference type="OrthoDB" id="9780815at2"/>
<dbReference type="GO" id="GO:0005737">
    <property type="term" value="C:cytoplasm"/>
    <property type="evidence" value="ECO:0007669"/>
    <property type="project" value="UniProtKB-SubCell"/>
</dbReference>
<dbReference type="GO" id="GO:0008254">
    <property type="term" value="F:3'-nucleotidase activity"/>
    <property type="evidence" value="ECO:0007669"/>
    <property type="project" value="TreeGrafter"/>
</dbReference>
<dbReference type="GO" id="GO:0008253">
    <property type="term" value="F:5'-nucleotidase activity"/>
    <property type="evidence" value="ECO:0007669"/>
    <property type="project" value="UniProtKB-UniRule"/>
</dbReference>
<dbReference type="GO" id="GO:0004309">
    <property type="term" value="F:exopolyphosphatase activity"/>
    <property type="evidence" value="ECO:0007669"/>
    <property type="project" value="TreeGrafter"/>
</dbReference>
<dbReference type="GO" id="GO:0046872">
    <property type="term" value="F:metal ion binding"/>
    <property type="evidence" value="ECO:0007669"/>
    <property type="project" value="UniProtKB-UniRule"/>
</dbReference>
<dbReference type="GO" id="GO:0000166">
    <property type="term" value="F:nucleotide binding"/>
    <property type="evidence" value="ECO:0007669"/>
    <property type="project" value="UniProtKB-KW"/>
</dbReference>
<dbReference type="FunFam" id="3.40.1210.10:FF:000001">
    <property type="entry name" value="5'/3'-nucleotidase SurE"/>
    <property type="match status" value="1"/>
</dbReference>
<dbReference type="Gene3D" id="3.40.1210.10">
    <property type="entry name" value="Survival protein SurE-like phosphatase/nucleotidase"/>
    <property type="match status" value="1"/>
</dbReference>
<dbReference type="HAMAP" id="MF_00060">
    <property type="entry name" value="SurE"/>
    <property type="match status" value="1"/>
</dbReference>
<dbReference type="InterPro" id="IPR030048">
    <property type="entry name" value="SurE"/>
</dbReference>
<dbReference type="InterPro" id="IPR002828">
    <property type="entry name" value="SurE-like_Pase/nucleotidase"/>
</dbReference>
<dbReference type="InterPro" id="IPR036523">
    <property type="entry name" value="SurE-like_sf"/>
</dbReference>
<dbReference type="NCBIfam" id="NF001490">
    <property type="entry name" value="PRK00346.1-4"/>
    <property type="match status" value="1"/>
</dbReference>
<dbReference type="NCBIfam" id="NF001492">
    <property type="entry name" value="PRK00346.2-2"/>
    <property type="match status" value="1"/>
</dbReference>
<dbReference type="NCBIfam" id="TIGR00087">
    <property type="entry name" value="surE"/>
    <property type="match status" value="1"/>
</dbReference>
<dbReference type="PANTHER" id="PTHR30457">
    <property type="entry name" value="5'-NUCLEOTIDASE SURE"/>
    <property type="match status" value="1"/>
</dbReference>
<dbReference type="PANTHER" id="PTHR30457:SF12">
    <property type="entry name" value="5'_3'-NUCLEOTIDASE SURE"/>
    <property type="match status" value="1"/>
</dbReference>
<dbReference type="Pfam" id="PF01975">
    <property type="entry name" value="SurE"/>
    <property type="match status" value="1"/>
</dbReference>
<dbReference type="SUPFAM" id="SSF64167">
    <property type="entry name" value="SurE-like"/>
    <property type="match status" value="1"/>
</dbReference>
<reference key="1">
    <citation type="journal article" date="2008" name="Environ. Microbiol.">
        <title>The complete genome sequence of Moorella thermoacetica (f. Clostridium thermoaceticum).</title>
        <authorList>
            <person name="Pierce E."/>
            <person name="Xie G."/>
            <person name="Barabote R.D."/>
            <person name="Saunders E."/>
            <person name="Han C.S."/>
            <person name="Detter J.C."/>
            <person name="Richardson P."/>
            <person name="Brettin T.S."/>
            <person name="Das A."/>
            <person name="Ljungdahl L.G."/>
            <person name="Ragsdale S.W."/>
        </authorList>
    </citation>
    <scope>NUCLEOTIDE SEQUENCE [LARGE SCALE GENOMIC DNA]</scope>
    <source>
        <strain>ATCC 39073 / JCM 9320</strain>
    </source>
</reference>
<evidence type="ECO:0000255" key="1">
    <source>
        <dbReference type="HAMAP-Rule" id="MF_00060"/>
    </source>
</evidence>
<keyword id="KW-0963">Cytoplasm</keyword>
<keyword id="KW-0378">Hydrolase</keyword>
<keyword id="KW-0479">Metal-binding</keyword>
<keyword id="KW-0547">Nucleotide-binding</keyword>